<sequence>MSEEVGAKRWYAVHTYSGYENKVKKNLEKRVESMNMTEQIFRVVIPEEEETQVKDGKAKKLTKKTFPGYVLVELVMTDESWYVVRNTPGVTGFVGSAGAGSKPNPLLPDEVRFILKQMGMKEKTIDVEVEVGEQVRIKSGPFANQVGEVQEIEADKFKLTVLVDMFGRETPVEVEFDQIEKL</sequence>
<organism>
    <name type="scientific">Staphylococcus carnosus (strain TM300)</name>
    <dbReference type="NCBI Taxonomy" id="396513"/>
    <lineage>
        <taxon>Bacteria</taxon>
        <taxon>Bacillati</taxon>
        <taxon>Bacillota</taxon>
        <taxon>Bacilli</taxon>
        <taxon>Bacillales</taxon>
        <taxon>Staphylococcaceae</taxon>
        <taxon>Staphylococcus</taxon>
    </lineage>
</organism>
<gene>
    <name evidence="1" type="primary">nusG</name>
    <name type="ordered locus">Sca_0192</name>
</gene>
<protein>
    <recommendedName>
        <fullName evidence="1">Transcription termination/antitermination protein NusG</fullName>
    </recommendedName>
</protein>
<accession>P36264</accession>
<accession>B9DKW9</accession>
<feature type="chain" id="PRO_0000113953" description="Transcription termination/antitermination protein NusG">
    <location>
        <begin position="1"/>
        <end position="182"/>
    </location>
</feature>
<feature type="domain" description="KOW" evidence="1">
    <location>
        <begin position="131"/>
        <end position="163"/>
    </location>
</feature>
<reference key="1">
    <citation type="journal article" date="1994" name="FEMS Microbiol. Lett.">
        <title>The Staphylococcus carnosus secE gene: cloning, nucleotide sequence, and functional characterization in Escherichia coli secE mutant strains.</title>
        <authorList>
            <person name="Meens J."/>
            <person name="Klose M."/>
            <person name="Freudl R."/>
        </authorList>
    </citation>
    <scope>NUCLEOTIDE SEQUENCE [GENOMIC DNA]</scope>
</reference>
<reference key="2">
    <citation type="journal article" date="2009" name="Appl. Environ. Microbiol.">
        <title>Genome analysis of the meat starter culture bacterium Staphylococcus carnosus TM300.</title>
        <authorList>
            <person name="Rosenstein R."/>
            <person name="Nerz C."/>
            <person name="Biswas L."/>
            <person name="Resch A."/>
            <person name="Raddatz G."/>
            <person name="Schuster S.C."/>
            <person name="Goetz F."/>
        </authorList>
    </citation>
    <scope>NUCLEOTIDE SEQUENCE [LARGE SCALE GENOMIC DNA]</scope>
    <source>
        <strain>TM300</strain>
    </source>
</reference>
<evidence type="ECO:0000255" key="1">
    <source>
        <dbReference type="HAMAP-Rule" id="MF_00948"/>
    </source>
</evidence>
<dbReference type="EMBL" id="X76134">
    <property type="protein sequence ID" value="CAA53738.1"/>
    <property type="molecule type" value="Genomic_DNA"/>
</dbReference>
<dbReference type="EMBL" id="AM295250">
    <property type="protein sequence ID" value="CAL27105.1"/>
    <property type="molecule type" value="Genomic_DNA"/>
</dbReference>
<dbReference type="PIR" id="S38870">
    <property type="entry name" value="S38870"/>
</dbReference>
<dbReference type="RefSeq" id="WP_012664220.1">
    <property type="nucleotide sequence ID" value="NC_012121.1"/>
</dbReference>
<dbReference type="SMR" id="P36264"/>
<dbReference type="GeneID" id="93795122"/>
<dbReference type="KEGG" id="sca:SCA_0192"/>
<dbReference type="eggNOG" id="COG0250">
    <property type="taxonomic scope" value="Bacteria"/>
</dbReference>
<dbReference type="HOGENOM" id="CLU_067287_1_1_9"/>
<dbReference type="OrthoDB" id="9809075at2"/>
<dbReference type="BioCyc" id="SCAR396513:SCA_RS00995-MONOMER"/>
<dbReference type="Proteomes" id="UP000000444">
    <property type="component" value="Chromosome"/>
</dbReference>
<dbReference type="GO" id="GO:0005829">
    <property type="term" value="C:cytosol"/>
    <property type="evidence" value="ECO:0007669"/>
    <property type="project" value="TreeGrafter"/>
</dbReference>
<dbReference type="GO" id="GO:0006353">
    <property type="term" value="P:DNA-templated transcription termination"/>
    <property type="evidence" value="ECO:0007669"/>
    <property type="project" value="UniProtKB-UniRule"/>
</dbReference>
<dbReference type="GO" id="GO:0032784">
    <property type="term" value="P:regulation of DNA-templated transcription elongation"/>
    <property type="evidence" value="ECO:0007669"/>
    <property type="project" value="InterPro"/>
</dbReference>
<dbReference type="GO" id="GO:0031564">
    <property type="term" value="P:transcription antitermination"/>
    <property type="evidence" value="ECO:0007669"/>
    <property type="project" value="UniProtKB-UniRule"/>
</dbReference>
<dbReference type="GO" id="GO:0140673">
    <property type="term" value="P:transcription elongation-coupled chromatin remodeling"/>
    <property type="evidence" value="ECO:0007669"/>
    <property type="project" value="InterPro"/>
</dbReference>
<dbReference type="CDD" id="cd06091">
    <property type="entry name" value="KOW_NusG"/>
    <property type="match status" value="1"/>
</dbReference>
<dbReference type="CDD" id="cd09891">
    <property type="entry name" value="NGN_Bact_1"/>
    <property type="match status" value="1"/>
</dbReference>
<dbReference type="FunFam" id="2.30.30.30:FF:000002">
    <property type="entry name" value="Transcription termination/antitermination factor NusG"/>
    <property type="match status" value="1"/>
</dbReference>
<dbReference type="FunFam" id="3.30.70.940:FF:000002">
    <property type="entry name" value="Transcription termination/antitermination protein NusG"/>
    <property type="match status" value="1"/>
</dbReference>
<dbReference type="Gene3D" id="2.30.30.30">
    <property type="match status" value="1"/>
</dbReference>
<dbReference type="Gene3D" id="3.30.70.940">
    <property type="entry name" value="NusG, N-terminal domain"/>
    <property type="match status" value="1"/>
</dbReference>
<dbReference type="HAMAP" id="MF_00948">
    <property type="entry name" value="NusG"/>
    <property type="match status" value="1"/>
</dbReference>
<dbReference type="InterPro" id="IPR005824">
    <property type="entry name" value="KOW"/>
</dbReference>
<dbReference type="InterPro" id="IPR047050">
    <property type="entry name" value="NGN"/>
</dbReference>
<dbReference type="InterPro" id="IPR006645">
    <property type="entry name" value="NGN-like_dom"/>
</dbReference>
<dbReference type="InterPro" id="IPR036735">
    <property type="entry name" value="NGN_dom_sf"/>
</dbReference>
<dbReference type="InterPro" id="IPR043425">
    <property type="entry name" value="NusG-like"/>
</dbReference>
<dbReference type="InterPro" id="IPR014722">
    <property type="entry name" value="Rib_uL2_dom2"/>
</dbReference>
<dbReference type="InterPro" id="IPR001062">
    <property type="entry name" value="Transcrpt_antiterm_NusG"/>
</dbReference>
<dbReference type="InterPro" id="IPR015869">
    <property type="entry name" value="Transcrpt_antiterm_NusG_bac_CS"/>
</dbReference>
<dbReference type="InterPro" id="IPR008991">
    <property type="entry name" value="Translation_prot_SH3-like_sf"/>
</dbReference>
<dbReference type="NCBIfam" id="TIGR00922">
    <property type="entry name" value="nusG"/>
    <property type="match status" value="1"/>
</dbReference>
<dbReference type="PANTHER" id="PTHR30265">
    <property type="entry name" value="RHO-INTERACTING TRANSCRIPTION TERMINATION FACTOR NUSG"/>
    <property type="match status" value="1"/>
</dbReference>
<dbReference type="PANTHER" id="PTHR30265:SF2">
    <property type="entry name" value="TRANSCRIPTION TERMINATION_ANTITERMINATION PROTEIN NUSG"/>
    <property type="match status" value="1"/>
</dbReference>
<dbReference type="Pfam" id="PF00467">
    <property type="entry name" value="KOW"/>
    <property type="match status" value="1"/>
</dbReference>
<dbReference type="Pfam" id="PF02357">
    <property type="entry name" value="NusG"/>
    <property type="match status" value="1"/>
</dbReference>
<dbReference type="PRINTS" id="PR00338">
    <property type="entry name" value="NUSGTNSCPFCT"/>
</dbReference>
<dbReference type="SMART" id="SM00739">
    <property type="entry name" value="KOW"/>
    <property type="match status" value="1"/>
</dbReference>
<dbReference type="SMART" id="SM00738">
    <property type="entry name" value="NGN"/>
    <property type="match status" value="1"/>
</dbReference>
<dbReference type="SUPFAM" id="SSF82679">
    <property type="entry name" value="N-utilization substance G protein NusG, N-terminal domain"/>
    <property type="match status" value="1"/>
</dbReference>
<dbReference type="SUPFAM" id="SSF50104">
    <property type="entry name" value="Translation proteins SH3-like domain"/>
    <property type="match status" value="1"/>
</dbReference>
<dbReference type="PROSITE" id="PS01014">
    <property type="entry name" value="NUSG"/>
    <property type="match status" value="1"/>
</dbReference>
<name>NUSG_STACT</name>
<comment type="function">
    <text evidence="1">Participates in transcription elongation, termination and antitermination.</text>
</comment>
<comment type="similarity">
    <text evidence="1">Belongs to the NusG family.</text>
</comment>
<proteinExistence type="inferred from homology"/>
<keyword id="KW-1185">Reference proteome</keyword>
<keyword id="KW-0804">Transcription</keyword>
<keyword id="KW-0889">Transcription antitermination</keyword>
<keyword id="KW-0805">Transcription regulation</keyword>
<keyword id="KW-0806">Transcription termination</keyword>